<comment type="function">
    <text evidence="1">Essential component of the helicase/primase complex. Unwinds the DNA at the replication forks and generates single-stranded DNA for both leading and lagging strand synthesis. The primase initiates primer synthesis and thereby produces large amount of short RNA primers on the lagging strand that the polymerase elongates using dNTPs.</text>
</comment>
<comment type="subunit">
    <text evidence="1">Associates with the helicase and the primase-associated factor to form the helicase-primase factor.</text>
</comment>
<comment type="subcellular location">
    <subcellularLocation>
        <location evidence="1">Host nucleus</location>
    </subcellularLocation>
    <text evidence="1">Requires the presence of the primase associated factor to properly localize in the host cell nucleus.</text>
</comment>
<comment type="similarity">
    <text evidence="1">Belongs to the herpesviridae DNA primase family.</text>
</comment>
<evidence type="ECO:0000255" key="1">
    <source>
        <dbReference type="HAMAP-Rule" id="MF_04011"/>
    </source>
</evidence>
<evidence type="ECO:0000256" key="2">
    <source>
        <dbReference type="SAM" id="MobiDB-lite"/>
    </source>
</evidence>
<organism>
    <name type="scientific">Human cytomegalovirus (strain Merlin)</name>
    <name type="common">HHV-5</name>
    <name type="synonym">Human herpesvirus 5</name>
    <dbReference type="NCBI Taxonomy" id="295027"/>
    <lineage>
        <taxon>Viruses</taxon>
        <taxon>Duplodnaviria</taxon>
        <taxon>Heunggongvirae</taxon>
        <taxon>Peploviricota</taxon>
        <taxon>Herviviricetes</taxon>
        <taxon>Herpesvirales</taxon>
        <taxon>Orthoherpesviridae</taxon>
        <taxon>Betaherpesvirinae</taxon>
        <taxon>Cytomegalovirus</taxon>
        <taxon>Cytomegalovirus humanbeta5</taxon>
        <taxon>Human cytomegalovirus</taxon>
    </lineage>
</organism>
<proteinExistence type="inferred from homology"/>
<keyword id="KW-0235">DNA replication</keyword>
<keyword id="KW-1048">Host nucleus</keyword>
<keyword id="KW-0945">Host-virus interaction</keyword>
<keyword id="KW-0479">Metal-binding</keyword>
<keyword id="KW-1185">Reference proteome</keyword>
<keyword id="KW-0808">Transferase</keyword>
<keyword id="KW-0862">Zinc</keyword>
<keyword id="KW-0863">Zinc-finger</keyword>
<dbReference type="EC" id="2.7.7.-" evidence="1"/>
<dbReference type="EMBL" id="AY446894">
    <property type="protein sequence ID" value="AAR31624.1"/>
    <property type="molecule type" value="Genomic_DNA"/>
</dbReference>
<dbReference type="RefSeq" id="YP_081518.1">
    <property type="nucleotide sequence ID" value="NC_006273.2"/>
</dbReference>
<dbReference type="GeneID" id="3077484"/>
<dbReference type="KEGG" id="vg:3077484"/>
<dbReference type="Reactome" id="R-HSA-9610379">
    <property type="pathway name" value="HCMV Late Events"/>
</dbReference>
<dbReference type="Proteomes" id="UP000000938">
    <property type="component" value="Segment"/>
</dbReference>
<dbReference type="GO" id="GO:0042025">
    <property type="term" value="C:host cell nucleus"/>
    <property type="evidence" value="ECO:0007669"/>
    <property type="project" value="UniProtKB-SubCell"/>
</dbReference>
<dbReference type="GO" id="GO:0003899">
    <property type="term" value="F:DNA-directed RNA polymerase activity"/>
    <property type="evidence" value="ECO:0007669"/>
    <property type="project" value="InterPro"/>
</dbReference>
<dbReference type="GO" id="GO:0008270">
    <property type="term" value="F:zinc ion binding"/>
    <property type="evidence" value="ECO:0007669"/>
    <property type="project" value="UniProtKB-KW"/>
</dbReference>
<dbReference type="GO" id="GO:0039686">
    <property type="term" value="P:bidirectional double-stranded viral DNA replication"/>
    <property type="evidence" value="ECO:0007669"/>
    <property type="project" value="InterPro"/>
</dbReference>
<dbReference type="GO" id="GO:0006260">
    <property type="term" value="P:DNA replication"/>
    <property type="evidence" value="ECO:0007669"/>
    <property type="project" value="UniProtKB-KW"/>
</dbReference>
<dbReference type="HAMAP" id="MF_04011">
    <property type="entry name" value="HSV_PRIM"/>
    <property type="match status" value="1"/>
</dbReference>
<dbReference type="InterPro" id="IPR033685">
    <property type="entry name" value="HSV_PRIM"/>
</dbReference>
<dbReference type="Pfam" id="PF03121">
    <property type="entry name" value="Herpes_UL52"/>
    <property type="match status" value="1"/>
</dbReference>
<sequence>MTLVLFATEYDSAHIVANVLSQTPTDHCVFPLLVKHQVSRRVYFCLQTQKCSDSRRVAPVFAVNNETLQLSRYLAARQPIPLSALIASLDEAETRPLYRHLFRTPVLSPEHGGEVREFKHLVYFHHAAVLRHLNQVFLCPTSPSWFISVFGHTEGQVLLTMAYYLFEGQYSTISTVEEYVRSFCTRDLGTIIPTHASMGEFARLLLGSPFRQRVSAFVAYAVARNRRDYTELEQVDTQINAFRERARLPDTVCVHYVYLAYRTALARARLLEYRRVVAYDADAAPEAQCTREPGFLGRRLSTELLDVMQKYFSLDNFLHDYVETHLLRLDESPHSATSPHGLGLAGYGGRIDGTHLAGFFGTSTQLARQLERINTLSESVFSPLERSLSGLLRLCASLRTAQTYTTGTLTRYSQRRYLLPEPALAPLLERPLPVYRVHLPNDQHVFCAVASETWHRSLFPRDLLRHVPDSRFSDEALTETVWLHDDDVASTSPETQFYYTRHEVFNERLPVFNFVADFDLRLRDGVSGLARHTVFELCRGLRRVWMTVWASLFGYTHPDRHPVYFFKSACPPNSVPVDAAGAPFDDDDYLDYRDERDTEEDEDGKEDKNNVPGNGVFQKTTSSVDTSPPYCRCKGKLGLRIITPFPACTIAVHPSVLRAVAQVLNHAVCLDAELHTLLDPISHPESSLDTGIYHHGRSVRLPYMYKMDQDDGYFMHRRLLPLFIVPDAYREHPLGFVRAQLDLRNLLHHHPPHDLPALPLSPPPRVILSVRDKICPSTEANFIETRSLNVTRYRRRGLTEVLAYHLYGGDGATAAAISDTDLQRLVVTRVWPPLLEHLTQHYEPHVSEQFTAPHVLLFQPHGACCVAVKRRDGARTRDFRCLNYTHRNPQETVQVFIDLRTEHSYALWASLWSRCFTKKCHSNAKNVHISIKIRPPDAPMPPATAV</sequence>
<gene>
    <name type="primary">UL70</name>
</gene>
<feature type="chain" id="PRO_0000416450" description="DNA primase">
    <location>
        <begin position="1"/>
        <end position="946"/>
    </location>
</feature>
<feature type="zinc finger region" description="CHC2-type" evidence="1">
    <location>
        <begin position="881"/>
        <end position="920"/>
    </location>
</feature>
<feature type="region of interest" description="Disordered" evidence="2">
    <location>
        <begin position="596"/>
        <end position="626"/>
    </location>
</feature>
<feature type="compositionally biased region" description="Polar residues" evidence="2">
    <location>
        <begin position="617"/>
        <end position="626"/>
    </location>
</feature>
<feature type="site" description="Essential for primase activity" evidence="1">
    <location>
        <position position="517"/>
    </location>
</feature>
<feature type="site" description="Essential for primase activity" evidence="1">
    <location>
        <position position="519"/>
    </location>
</feature>
<accession>F5HG51</accession>
<protein>
    <recommendedName>
        <fullName evidence="1">DNA primase</fullName>
        <ecNumber evidence="1">2.7.7.-</ecNumber>
    </recommendedName>
</protein>
<reference key="1">
    <citation type="journal article" date="2004" name="J. Gen. Virol.">
        <title>Genetic content of wild-type human cytomegalovirus.</title>
        <authorList>
            <person name="Dolan A."/>
            <person name="Cunningham C."/>
            <person name="Hector R.D."/>
            <person name="Hassan-Walker A.F."/>
            <person name="Lee L."/>
            <person name="Addison C."/>
            <person name="Dargan D.J."/>
            <person name="McGeoch D.J."/>
            <person name="Gatherer D."/>
            <person name="Emery V.C."/>
            <person name="Griffiths P.D."/>
            <person name="Sinzger C."/>
            <person name="McSharry B.P."/>
            <person name="Wilkinson G.W.G."/>
            <person name="Davison A.J."/>
        </authorList>
    </citation>
    <scope>NUCLEOTIDE SEQUENCE [LARGE SCALE GENOMIC DNA]</scope>
</reference>
<name>PRIM_HCMVM</name>
<organismHost>
    <name type="scientific">Homo sapiens</name>
    <name type="common">Human</name>
    <dbReference type="NCBI Taxonomy" id="9606"/>
</organismHost>